<proteinExistence type="evidence at transcript level"/>
<keyword id="KW-0256">Endoplasmic reticulum</keyword>
<keyword id="KW-0378">Hydrolase</keyword>
<keyword id="KW-0443">Lipid metabolism</keyword>
<keyword id="KW-0472">Membrane</keyword>
<keyword id="KW-0492">Microsome</keyword>
<keyword id="KW-1185">Reference proteome</keyword>
<keyword id="KW-0812">Transmembrane</keyword>
<keyword id="KW-1133">Transmembrane helix</keyword>
<organism>
    <name type="scientific">Xenopus tropicalis</name>
    <name type="common">Western clawed frog</name>
    <name type="synonym">Silurana tropicalis</name>
    <dbReference type="NCBI Taxonomy" id="8364"/>
    <lineage>
        <taxon>Eukaryota</taxon>
        <taxon>Metazoa</taxon>
        <taxon>Chordata</taxon>
        <taxon>Craniata</taxon>
        <taxon>Vertebrata</taxon>
        <taxon>Euteleostomi</taxon>
        <taxon>Amphibia</taxon>
        <taxon>Batrachia</taxon>
        <taxon>Anura</taxon>
        <taxon>Pipoidea</taxon>
        <taxon>Pipidae</taxon>
        <taxon>Xenopodinae</taxon>
        <taxon>Xenopus</taxon>
        <taxon>Silurana</taxon>
    </lineage>
</organism>
<reference key="1">
    <citation type="submission" date="2006-08" db="EMBL/GenBank/DDBJ databases">
        <authorList>
            <consortium name="NIH - Xenopus Gene Collection (XGC) project"/>
        </authorList>
    </citation>
    <scope>NUCLEOTIDE SEQUENCE [LARGE SCALE MRNA]</scope>
    <source>
        <strain>N6</strain>
        <tissue>Skeletal muscle</tissue>
    </source>
</reference>
<comment type="function">
    <text evidence="2">Catalyzes the hydrolysis of epoxide-containing fatty acids. Active in vitro against epoxyeicosatrienoic acids (EETs) including 8,9-EET, 9,10-EET, 11,12-EET and 14,15-EET and leukotoxin.</text>
</comment>
<comment type="catalytic activity">
    <reaction evidence="2">
        <text>an epoxide + H2O = an ethanediol</text>
        <dbReference type="Rhea" id="RHEA:19037"/>
        <dbReference type="ChEBI" id="CHEBI:15377"/>
        <dbReference type="ChEBI" id="CHEBI:32955"/>
        <dbReference type="ChEBI" id="CHEBI:140594"/>
        <dbReference type="EC" id="3.3.2.10"/>
    </reaction>
    <physiologicalReaction direction="left-to-right" evidence="2">
        <dbReference type="Rhea" id="RHEA:19038"/>
    </physiologicalReaction>
</comment>
<comment type="catalytic activity">
    <reaction evidence="2">
        <text>9,10-epoxyoctadecanoate + H2O = 9,10-dihydroxyoctadecanoate</text>
        <dbReference type="Rhea" id="RHEA:45352"/>
        <dbReference type="ChEBI" id="CHEBI:15377"/>
        <dbReference type="ChEBI" id="CHEBI:85195"/>
        <dbReference type="ChEBI" id="CHEBI:85197"/>
    </reaction>
    <physiologicalReaction direction="left-to-right" evidence="2">
        <dbReference type="Rhea" id="RHEA:45353"/>
    </physiologicalReaction>
</comment>
<comment type="catalytic activity">
    <reaction evidence="2">
        <text>9,10-epoxy-(12Z)-octadecenoate + H2O = 9,10-dihydroxy-(12Z)-octadecenoate</text>
        <dbReference type="Rhea" id="RHEA:44032"/>
        <dbReference type="ChEBI" id="CHEBI:15377"/>
        <dbReference type="ChEBI" id="CHEBI:84023"/>
        <dbReference type="ChEBI" id="CHEBI:84027"/>
    </reaction>
    <physiologicalReaction direction="left-to-right" evidence="2">
        <dbReference type="Rhea" id="RHEA:44033"/>
    </physiologicalReaction>
</comment>
<comment type="catalytic activity">
    <reaction evidence="2">
        <text>8,9-epoxy-(5Z,11Z,14Z)-eicosatrienoate + H2O = 8,9-dihydroxy-(5Z,11Z,14Z)-eicosatrienoate</text>
        <dbReference type="Rhea" id="RHEA:44048"/>
        <dbReference type="ChEBI" id="CHEBI:15377"/>
        <dbReference type="ChEBI" id="CHEBI:84025"/>
        <dbReference type="ChEBI" id="CHEBI:84032"/>
    </reaction>
    <physiologicalReaction direction="left-to-right" evidence="2">
        <dbReference type="Rhea" id="RHEA:44049"/>
    </physiologicalReaction>
</comment>
<comment type="catalytic activity">
    <reaction evidence="2">
        <text>11,12-epoxy-(5Z,8Z,14Z)-eicosatrienoate + H2O = 11,12-dihydroxy-(5Z,8Z,14Z)-eicosatrienoate</text>
        <dbReference type="Rhea" id="RHEA:44044"/>
        <dbReference type="ChEBI" id="CHEBI:15377"/>
        <dbReference type="ChEBI" id="CHEBI:76625"/>
        <dbReference type="ChEBI" id="CHEBI:84031"/>
    </reaction>
    <physiologicalReaction direction="left-to-right" evidence="2">
        <dbReference type="Rhea" id="RHEA:44045"/>
    </physiologicalReaction>
</comment>
<comment type="catalytic activity">
    <reaction evidence="2">
        <text>14,15-epoxy-(5Z,8Z,11Z)-eicosatrienoate + H2O = 14,15-dihydroxy-(5Z,8Z,11Z)-eicosatrienoate</text>
        <dbReference type="Rhea" id="RHEA:44040"/>
        <dbReference type="ChEBI" id="CHEBI:15377"/>
        <dbReference type="ChEBI" id="CHEBI:84024"/>
        <dbReference type="ChEBI" id="CHEBI:84029"/>
    </reaction>
    <physiologicalReaction direction="left-to-right" evidence="2">
        <dbReference type="Rhea" id="RHEA:44041"/>
    </physiologicalReaction>
</comment>
<comment type="activity regulation">
    <text evidence="2">Inhibited by 1-(1-acetylpiperidin-4-yl)-3-(4-(trifl uoromethoxy)phenyl)urea (TPAU), 1-cyclohexyl-3-dodecylurea (CDU), 12-(3-adamantan-1-yl-ureido)-dodecanoic acid (AUDA), 1-((3S, 5S, 7S)-adamantan-1-yl)-3-(5-(2-(2-ethoxyethoxy) ethoxy)pentyl)urea (AEPU) and to a lesser extent by 8-(3-((3S, 5S, 7S)-adamantan-1-yl)ureido) octanoic acid (AUOA).</text>
</comment>
<comment type="subcellular location">
    <subcellularLocation>
        <location evidence="2">Microsome membrane</location>
        <topology evidence="3">Single-pass membrane protein</topology>
    </subcellularLocation>
</comment>
<comment type="similarity">
    <text evidence="4">Belongs to the AB hydrolase superfamily. Epoxide hydrolase family.</text>
</comment>
<gene>
    <name type="primary">ephx3</name>
    <name type="synonym">abhd9</name>
</gene>
<dbReference type="EC" id="3.3.2.10" evidence="2"/>
<dbReference type="EMBL" id="BC121674">
    <property type="protein sequence ID" value="AAI21675.1"/>
    <property type="molecule type" value="mRNA"/>
</dbReference>
<dbReference type="RefSeq" id="NP_001072430.1">
    <property type="nucleotide sequence ID" value="NM_001078962.1"/>
</dbReference>
<dbReference type="RefSeq" id="XP_031753918.1">
    <property type="nucleotide sequence ID" value="XM_031898058.1"/>
</dbReference>
<dbReference type="RefSeq" id="XP_031753919.1">
    <property type="nucleotide sequence ID" value="XM_031898059.1"/>
</dbReference>
<dbReference type="RefSeq" id="XP_031753920.1">
    <property type="nucleotide sequence ID" value="XM_031898060.1"/>
</dbReference>
<dbReference type="RefSeq" id="XP_031753921.1">
    <property type="nucleotide sequence ID" value="XM_031898061.1"/>
</dbReference>
<dbReference type="SMR" id="Q0IIS3"/>
<dbReference type="STRING" id="8364.ENSXETP00000053505"/>
<dbReference type="ESTHER" id="xentr-ephx3">
    <property type="family name" value="Epoxide_hydrolase"/>
</dbReference>
<dbReference type="MEROPS" id="S33.978"/>
<dbReference type="PaxDb" id="8364-ENSXETP00000005474"/>
<dbReference type="DNASU" id="779884"/>
<dbReference type="GeneID" id="779884"/>
<dbReference type="KEGG" id="xtr:779884"/>
<dbReference type="AGR" id="Xenbase:XB-GENE-5900414"/>
<dbReference type="CTD" id="79852"/>
<dbReference type="Xenbase" id="XB-GENE-5900414">
    <property type="gene designation" value="ephx3"/>
</dbReference>
<dbReference type="eggNOG" id="KOG4178">
    <property type="taxonomic scope" value="Eukaryota"/>
</dbReference>
<dbReference type="HOGENOM" id="CLU_020336_7_3_1"/>
<dbReference type="InParanoid" id="Q0IIS3"/>
<dbReference type="OMA" id="VYAREWL"/>
<dbReference type="OrthoDB" id="408373at2759"/>
<dbReference type="PhylomeDB" id="Q0IIS3"/>
<dbReference type="TreeFam" id="TF314403"/>
<dbReference type="Proteomes" id="UP000008143">
    <property type="component" value="Chromosome 3"/>
</dbReference>
<dbReference type="Bgee" id="ENSXETG00000002569">
    <property type="expression patterns" value="Expressed in skeletal muscle tissue and 13 other cell types or tissues"/>
</dbReference>
<dbReference type="GO" id="GO:0005783">
    <property type="term" value="C:endoplasmic reticulum"/>
    <property type="evidence" value="ECO:0007669"/>
    <property type="project" value="UniProtKB-KW"/>
</dbReference>
<dbReference type="GO" id="GO:0016020">
    <property type="term" value="C:membrane"/>
    <property type="evidence" value="ECO:0007669"/>
    <property type="project" value="UniProtKB-KW"/>
</dbReference>
<dbReference type="GO" id="GO:0004301">
    <property type="term" value="F:epoxide hydrolase activity"/>
    <property type="evidence" value="ECO:0007669"/>
    <property type="project" value="UniProtKB-EC"/>
</dbReference>
<dbReference type="GO" id="GO:0006629">
    <property type="term" value="P:lipid metabolic process"/>
    <property type="evidence" value="ECO:0007669"/>
    <property type="project" value="UniProtKB-KW"/>
</dbReference>
<dbReference type="Gene3D" id="3.40.50.1820">
    <property type="entry name" value="alpha/beta hydrolase"/>
    <property type="match status" value="1"/>
</dbReference>
<dbReference type="InterPro" id="IPR000073">
    <property type="entry name" value="AB_hydrolase_1"/>
</dbReference>
<dbReference type="InterPro" id="IPR029058">
    <property type="entry name" value="AB_hydrolase_fold"/>
</dbReference>
<dbReference type="InterPro" id="IPR000639">
    <property type="entry name" value="Epox_hydrolase-like"/>
</dbReference>
<dbReference type="PANTHER" id="PTHR43329">
    <property type="entry name" value="EPOXIDE HYDROLASE"/>
    <property type="match status" value="1"/>
</dbReference>
<dbReference type="Pfam" id="PF00561">
    <property type="entry name" value="Abhydrolase_1"/>
    <property type="match status" value="1"/>
</dbReference>
<dbReference type="PRINTS" id="PR00111">
    <property type="entry name" value="ABHYDROLASE"/>
</dbReference>
<dbReference type="PRINTS" id="PR00412">
    <property type="entry name" value="EPOXHYDRLASE"/>
</dbReference>
<dbReference type="SUPFAM" id="SSF53474">
    <property type="entry name" value="alpha/beta-Hydrolases"/>
    <property type="match status" value="1"/>
</dbReference>
<sequence>MQLYLSRLLLIVTRTALRVTGVFFWVLVYVAALLAAVSYIPDALRLLTRGPLSAFRWGPRKAAPACLTSSAHGQHGYIRMKDSGIRFHYVASGDKRNPLMLLLHGFPENWYSWRYQLDEFSNGYRTVAIDLRGFGGSDAPSRLEDYKMEILLQDLQDLIRGLGYSRCVLVGHDWGGTLAWTFAVRHRDMVTHLIVMNAPHPSAFHDYVLSHPSQLFSSRYVFLFQLPLIPEILLSLRDFEHIKKPLTDATHGIQNVECKLSKEEVEAFVYYPSQKGALTPPLNYYRNLFGFFPVKAQDVLVPTLLLWGEHDAFLEAAMVPEMQQYVRAPFRAEIIPNASHWLQQDRPQEVNKIIRDFLKEDFLVHRN</sequence>
<evidence type="ECO:0000250" key="1">
    <source>
        <dbReference type="UniProtKB" id="P34913"/>
    </source>
</evidence>
<evidence type="ECO:0000250" key="2">
    <source>
        <dbReference type="UniProtKB" id="Q9H6B9"/>
    </source>
</evidence>
<evidence type="ECO:0000255" key="3"/>
<evidence type="ECO:0000305" key="4"/>
<name>EPHX3_XENTR</name>
<accession>Q0IIS3</accession>
<protein>
    <recommendedName>
        <fullName>Epoxide hydrolase 3</fullName>
        <shortName evidence="2">EH3</shortName>
        <ecNumber evidence="2">3.3.2.10</ecNumber>
    </recommendedName>
    <alternativeName>
        <fullName>Abhydrolase domain-containing protein 9</fullName>
    </alternativeName>
</protein>
<feature type="chain" id="PRO_0000281380" description="Epoxide hydrolase 3">
    <location>
        <begin position="1"/>
        <end position="367"/>
    </location>
</feature>
<feature type="transmembrane region" description="Helical" evidence="3">
    <location>
        <begin position="21"/>
        <end position="41"/>
    </location>
</feature>
<feature type="active site" description="Nucleophile" evidence="1">
    <location>
        <position position="173"/>
    </location>
</feature>
<feature type="active site" description="Proton donor" evidence="1">
    <location>
        <position position="285"/>
    </location>
</feature>
<feature type="active site" description="Proton acceptor" evidence="1">
    <location>
        <position position="340"/>
    </location>
</feature>